<evidence type="ECO:0000255" key="1">
    <source>
        <dbReference type="HAMAP-Rule" id="MF_00033"/>
    </source>
</evidence>
<name>MURG_ECOSE</name>
<comment type="function">
    <text evidence="1">Cell wall formation. Catalyzes the transfer of a GlcNAc subunit on undecaprenyl-pyrophosphoryl-MurNAc-pentapeptide (lipid intermediate I) to form undecaprenyl-pyrophosphoryl-MurNAc-(pentapeptide)GlcNAc (lipid intermediate II).</text>
</comment>
<comment type="catalytic activity">
    <reaction evidence="1">
        <text>di-trans,octa-cis-undecaprenyl diphospho-N-acetyl-alpha-D-muramoyl-L-alanyl-D-glutamyl-meso-2,6-diaminopimeloyl-D-alanyl-D-alanine + UDP-N-acetyl-alpha-D-glucosamine = di-trans,octa-cis-undecaprenyl diphospho-[N-acetyl-alpha-D-glucosaminyl-(1-&gt;4)]-N-acetyl-alpha-D-muramoyl-L-alanyl-D-glutamyl-meso-2,6-diaminopimeloyl-D-alanyl-D-alanine + UDP + H(+)</text>
        <dbReference type="Rhea" id="RHEA:31227"/>
        <dbReference type="ChEBI" id="CHEBI:15378"/>
        <dbReference type="ChEBI" id="CHEBI:57705"/>
        <dbReference type="ChEBI" id="CHEBI:58223"/>
        <dbReference type="ChEBI" id="CHEBI:61387"/>
        <dbReference type="ChEBI" id="CHEBI:61388"/>
        <dbReference type="EC" id="2.4.1.227"/>
    </reaction>
</comment>
<comment type="pathway">
    <text evidence="1">Cell wall biogenesis; peptidoglycan biosynthesis.</text>
</comment>
<comment type="subcellular location">
    <subcellularLocation>
        <location evidence="1">Cell inner membrane</location>
        <topology evidence="1">Peripheral membrane protein</topology>
        <orientation evidence="1">Cytoplasmic side</orientation>
    </subcellularLocation>
</comment>
<comment type="similarity">
    <text evidence="1">Belongs to the glycosyltransferase 28 family. MurG subfamily.</text>
</comment>
<protein>
    <recommendedName>
        <fullName evidence="1">UDP-N-acetylglucosamine--N-acetylmuramyl-(pentapeptide) pyrophosphoryl-undecaprenol N-acetylglucosamine transferase</fullName>
        <ecNumber evidence="1">2.4.1.227</ecNumber>
    </recommendedName>
    <alternativeName>
        <fullName evidence="1">Undecaprenyl-PP-MurNAc-pentapeptide-UDPGlcNAc GlcNAc transferase</fullName>
    </alternativeName>
</protein>
<accession>B6HZ67</accession>
<organism>
    <name type="scientific">Escherichia coli (strain SE11)</name>
    <dbReference type="NCBI Taxonomy" id="409438"/>
    <lineage>
        <taxon>Bacteria</taxon>
        <taxon>Pseudomonadati</taxon>
        <taxon>Pseudomonadota</taxon>
        <taxon>Gammaproteobacteria</taxon>
        <taxon>Enterobacterales</taxon>
        <taxon>Enterobacteriaceae</taxon>
        <taxon>Escherichia</taxon>
    </lineage>
</organism>
<reference key="1">
    <citation type="journal article" date="2008" name="DNA Res.">
        <title>Complete genome sequence and comparative analysis of the wild-type commensal Escherichia coli strain SE11 isolated from a healthy adult.</title>
        <authorList>
            <person name="Oshima K."/>
            <person name="Toh H."/>
            <person name="Ogura Y."/>
            <person name="Sasamoto H."/>
            <person name="Morita H."/>
            <person name="Park S.-H."/>
            <person name="Ooka T."/>
            <person name="Iyoda S."/>
            <person name="Taylor T.D."/>
            <person name="Hayashi T."/>
            <person name="Itoh K."/>
            <person name="Hattori M."/>
        </authorList>
    </citation>
    <scope>NUCLEOTIDE SEQUENCE [LARGE SCALE GENOMIC DNA]</scope>
    <source>
        <strain>SE11</strain>
    </source>
</reference>
<gene>
    <name evidence="1" type="primary">murG</name>
    <name type="ordered locus">ECSE_0092</name>
</gene>
<proteinExistence type="inferred from homology"/>
<feature type="chain" id="PRO_1000090430" description="UDP-N-acetylglucosamine--N-acetylmuramyl-(pentapeptide) pyrophosphoryl-undecaprenol N-acetylglucosamine transferase">
    <location>
        <begin position="1"/>
        <end position="355"/>
    </location>
</feature>
<feature type="binding site" evidence="1">
    <location>
        <begin position="15"/>
        <end position="17"/>
    </location>
    <ligand>
        <name>UDP-N-acetyl-alpha-D-glucosamine</name>
        <dbReference type="ChEBI" id="CHEBI:57705"/>
    </ligand>
</feature>
<feature type="binding site" evidence="1">
    <location>
        <position position="127"/>
    </location>
    <ligand>
        <name>UDP-N-acetyl-alpha-D-glucosamine</name>
        <dbReference type="ChEBI" id="CHEBI:57705"/>
    </ligand>
</feature>
<feature type="binding site" evidence="1">
    <location>
        <position position="163"/>
    </location>
    <ligand>
        <name>UDP-N-acetyl-alpha-D-glucosamine</name>
        <dbReference type="ChEBI" id="CHEBI:57705"/>
    </ligand>
</feature>
<feature type="binding site" evidence="1">
    <location>
        <position position="191"/>
    </location>
    <ligand>
        <name>UDP-N-acetyl-alpha-D-glucosamine</name>
        <dbReference type="ChEBI" id="CHEBI:57705"/>
    </ligand>
</feature>
<feature type="binding site" evidence="1">
    <location>
        <position position="244"/>
    </location>
    <ligand>
        <name>UDP-N-acetyl-alpha-D-glucosamine</name>
        <dbReference type="ChEBI" id="CHEBI:57705"/>
    </ligand>
</feature>
<feature type="binding site" evidence="1">
    <location>
        <begin position="263"/>
        <end position="268"/>
    </location>
    <ligand>
        <name>UDP-N-acetyl-alpha-D-glucosamine</name>
        <dbReference type="ChEBI" id="CHEBI:57705"/>
    </ligand>
</feature>
<feature type="binding site" evidence="1">
    <location>
        <position position="288"/>
    </location>
    <ligand>
        <name>UDP-N-acetyl-alpha-D-glucosamine</name>
        <dbReference type="ChEBI" id="CHEBI:57705"/>
    </ligand>
</feature>
<dbReference type="EC" id="2.4.1.227" evidence="1"/>
<dbReference type="EMBL" id="AP009240">
    <property type="protein sequence ID" value="BAG75616.1"/>
    <property type="molecule type" value="Genomic_DNA"/>
</dbReference>
<dbReference type="RefSeq" id="WP_000016559.1">
    <property type="nucleotide sequence ID" value="NC_011415.1"/>
</dbReference>
<dbReference type="SMR" id="B6HZ67"/>
<dbReference type="CAZy" id="GT28">
    <property type="family name" value="Glycosyltransferase Family 28"/>
</dbReference>
<dbReference type="GeneID" id="93777344"/>
<dbReference type="KEGG" id="ecy:ECSE_0092"/>
<dbReference type="HOGENOM" id="CLU_037404_2_0_6"/>
<dbReference type="UniPathway" id="UPA00219"/>
<dbReference type="Proteomes" id="UP000008199">
    <property type="component" value="Chromosome"/>
</dbReference>
<dbReference type="GO" id="GO:0005886">
    <property type="term" value="C:plasma membrane"/>
    <property type="evidence" value="ECO:0007669"/>
    <property type="project" value="UniProtKB-SubCell"/>
</dbReference>
<dbReference type="GO" id="GO:0051991">
    <property type="term" value="F:UDP-N-acetyl-D-glucosamine:N-acetylmuramoyl-L-alanyl-D-glutamyl-meso-2,6-diaminopimelyl-D-alanyl-D-alanine-diphosphoundecaprenol 4-beta-N-acetylglucosaminlytransferase activity"/>
    <property type="evidence" value="ECO:0007669"/>
    <property type="project" value="RHEA"/>
</dbReference>
<dbReference type="GO" id="GO:0050511">
    <property type="term" value="F:undecaprenyldiphospho-muramoylpentapeptide beta-N-acetylglucosaminyltransferase activity"/>
    <property type="evidence" value="ECO:0007669"/>
    <property type="project" value="UniProtKB-UniRule"/>
</dbReference>
<dbReference type="GO" id="GO:0005975">
    <property type="term" value="P:carbohydrate metabolic process"/>
    <property type="evidence" value="ECO:0007669"/>
    <property type="project" value="InterPro"/>
</dbReference>
<dbReference type="GO" id="GO:0051301">
    <property type="term" value="P:cell division"/>
    <property type="evidence" value="ECO:0007669"/>
    <property type="project" value="UniProtKB-KW"/>
</dbReference>
<dbReference type="GO" id="GO:0071555">
    <property type="term" value="P:cell wall organization"/>
    <property type="evidence" value="ECO:0007669"/>
    <property type="project" value="UniProtKB-KW"/>
</dbReference>
<dbReference type="GO" id="GO:0030259">
    <property type="term" value="P:lipid glycosylation"/>
    <property type="evidence" value="ECO:0007669"/>
    <property type="project" value="UniProtKB-UniRule"/>
</dbReference>
<dbReference type="GO" id="GO:0009252">
    <property type="term" value="P:peptidoglycan biosynthetic process"/>
    <property type="evidence" value="ECO:0007669"/>
    <property type="project" value="UniProtKB-UniRule"/>
</dbReference>
<dbReference type="GO" id="GO:0008360">
    <property type="term" value="P:regulation of cell shape"/>
    <property type="evidence" value="ECO:0007669"/>
    <property type="project" value="UniProtKB-KW"/>
</dbReference>
<dbReference type="CDD" id="cd03785">
    <property type="entry name" value="GT28_MurG"/>
    <property type="match status" value="1"/>
</dbReference>
<dbReference type="FunFam" id="3.40.50.2000:FF:000016">
    <property type="entry name" value="UDP-N-acetylglucosamine--N-acetylmuramyl-(pentapeptide) pyrophosphoryl-undecaprenol N-acetylglucosamine transferase"/>
    <property type="match status" value="1"/>
</dbReference>
<dbReference type="FunFam" id="3.40.50.2000:FF:000018">
    <property type="entry name" value="UDP-N-acetylglucosamine--N-acetylmuramyl-(pentapeptide) pyrophosphoryl-undecaprenol N-acetylglucosamine transferase"/>
    <property type="match status" value="1"/>
</dbReference>
<dbReference type="Gene3D" id="3.40.50.2000">
    <property type="entry name" value="Glycogen Phosphorylase B"/>
    <property type="match status" value="2"/>
</dbReference>
<dbReference type="HAMAP" id="MF_00033">
    <property type="entry name" value="MurG"/>
    <property type="match status" value="1"/>
</dbReference>
<dbReference type="InterPro" id="IPR006009">
    <property type="entry name" value="GlcNAc_MurG"/>
</dbReference>
<dbReference type="InterPro" id="IPR007235">
    <property type="entry name" value="Glyco_trans_28_C"/>
</dbReference>
<dbReference type="InterPro" id="IPR004276">
    <property type="entry name" value="GlycoTrans_28_N"/>
</dbReference>
<dbReference type="NCBIfam" id="TIGR01133">
    <property type="entry name" value="murG"/>
    <property type="match status" value="1"/>
</dbReference>
<dbReference type="PANTHER" id="PTHR21015:SF22">
    <property type="entry name" value="GLYCOSYLTRANSFERASE"/>
    <property type="match status" value="1"/>
</dbReference>
<dbReference type="PANTHER" id="PTHR21015">
    <property type="entry name" value="UDP-N-ACETYLGLUCOSAMINE--N-ACETYLMURAMYL-(PENTAPEPTIDE) PYROPHOSPHORYL-UNDECAPRENOL N-ACETYLGLUCOSAMINE TRANSFERASE 1"/>
    <property type="match status" value="1"/>
</dbReference>
<dbReference type="Pfam" id="PF04101">
    <property type="entry name" value="Glyco_tran_28_C"/>
    <property type="match status" value="1"/>
</dbReference>
<dbReference type="Pfam" id="PF03033">
    <property type="entry name" value="Glyco_transf_28"/>
    <property type="match status" value="1"/>
</dbReference>
<dbReference type="SUPFAM" id="SSF53756">
    <property type="entry name" value="UDP-Glycosyltransferase/glycogen phosphorylase"/>
    <property type="match status" value="1"/>
</dbReference>
<sequence>MSGQGKRLMVMAGGTGGHVFPGLAVAHHLMAQGWQVRWLGTADRMEADLVPKHGIEIDFIRISGLRGKGIKALIAAPLRIFNAWRQARAIMKAYKPDVVLGMGGYVSGPGGLAAWSLGIPVVLHEQNGIAGLTNKWLAKIATKVMQAFPGAFPNAEVVGNPVRTDVLALPLPQQRLAGREGPVRVLVVGGSQGARILNQTMPQVAAKLGDSVTIWHQSGKGSQQSVEQAYAEAGQPQHKVTEFIDDMAAAYAWADVVVCRSGALTVSEIAAAGLPALFVPFQHKDRQQYWNALPLEKAGAAKIIEQPQLSVDAVANTLAGWSRETLLTMAERARAASIPDATERVANEVSRAARA</sequence>
<keyword id="KW-0131">Cell cycle</keyword>
<keyword id="KW-0132">Cell division</keyword>
<keyword id="KW-0997">Cell inner membrane</keyword>
<keyword id="KW-1003">Cell membrane</keyword>
<keyword id="KW-0133">Cell shape</keyword>
<keyword id="KW-0961">Cell wall biogenesis/degradation</keyword>
<keyword id="KW-0328">Glycosyltransferase</keyword>
<keyword id="KW-0472">Membrane</keyword>
<keyword id="KW-0573">Peptidoglycan synthesis</keyword>
<keyword id="KW-0808">Transferase</keyword>